<organism>
    <name type="scientific">Shewanella pealeana (strain ATCC 700345 / ANG-SQ1)</name>
    <dbReference type="NCBI Taxonomy" id="398579"/>
    <lineage>
        <taxon>Bacteria</taxon>
        <taxon>Pseudomonadati</taxon>
        <taxon>Pseudomonadota</taxon>
        <taxon>Gammaproteobacteria</taxon>
        <taxon>Alteromonadales</taxon>
        <taxon>Shewanellaceae</taxon>
        <taxon>Shewanella</taxon>
    </lineage>
</organism>
<evidence type="ECO:0000255" key="1">
    <source>
        <dbReference type="HAMAP-Rule" id="MF_01025"/>
    </source>
</evidence>
<accession>A8H9A1</accession>
<sequence>MSNRVIIFDTTLRDGEQALAASLTVKEKLQIALALERLGVDVMEVGFPVSSPGDFESVQTIAKTIKNSRVCALSRALEKDIDAAAQALSVAEQFRIHTFISTSTIHVESKLKRSFDQVLEMAVGAVKYARRFTDDVEFSCEDAGRTPIDNLCRMVEEAIKAGARTINIPDTVGYTVPSEFGGIIQTLFNRVPNIDQAVISVHCHDDLGLSVANSITAVQHGARQIECTVNGIGERAGNCSLEEIAMILSTRKGELGLETGINAKEIHRTSSLVSQLCNMPVQANKAIVGANAFTHSSGIHQDGMLKAQNTYEIMTPESIGLNRNNLNMTSRSGRHVIKHRMSELGYGEQDYNMDVLYEEFLTLADKKGQVFDYDLEALAFMEAQAETDDHYKLQQLVVHSDSTEGSATATVKVAVNGETITEAATGNGPVDAAYKAVARASGCEINISSYQLSAKGEGQNALGQVDITAKYREQNFHGVGLATDVVEASAKALVHVMNLTWRADKVADCKQRIQQNKRELGGV</sequence>
<dbReference type="EC" id="2.3.3.13" evidence="1"/>
<dbReference type="EMBL" id="CP000851">
    <property type="protein sequence ID" value="ABV89138.1"/>
    <property type="molecule type" value="Genomic_DNA"/>
</dbReference>
<dbReference type="RefSeq" id="WP_012157020.1">
    <property type="nucleotide sequence ID" value="NC_009901.1"/>
</dbReference>
<dbReference type="SMR" id="A8H9A1"/>
<dbReference type="STRING" id="398579.Spea_3828"/>
<dbReference type="KEGG" id="spl:Spea_3828"/>
<dbReference type="eggNOG" id="COG0119">
    <property type="taxonomic scope" value="Bacteria"/>
</dbReference>
<dbReference type="HOGENOM" id="CLU_022158_0_1_6"/>
<dbReference type="OrthoDB" id="9803573at2"/>
<dbReference type="UniPathway" id="UPA00048">
    <property type="reaction ID" value="UER00070"/>
</dbReference>
<dbReference type="Proteomes" id="UP000002608">
    <property type="component" value="Chromosome"/>
</dbReference>
<dbReference type="GO" id="GO:0005829">
    <property type="term" value="C:cytosol"/>
    <property type="evidence" value="ECO:0007669"/>
    <property type="project" value="TreeGrafter"/>
</dbReference>
<dbReference type="GO" id="GO:0003852">
    <property type="term" value="F:2-isopropylmalate synthase activity"/>
    <property type="evidence" value="ECO:0007669"/>
    <property type="project" value="UniProtKB-UniRule"/>
</dbReference>
<dbReference type="GO" id="GO:0003985">
    <property type="term" value="F:acetyl-CoA C-acetyltransferase activity"/>
    <property type="evidence" value="ECO:0007669"/>
    <property type="project" value="UniProtKB-UniRule"/>
</dbReference>
<dbReference type="GO" id="GO:0030145">
    <property type="term" value="F:manganese ion binding"/>
    <property type="evidence" value="ECO:0007669"/>
    <property type="project" value="UniProtKB-UniRule"/>
</dbReference>
<dbReference type="GO" id="GO:0009098">
    <property type="term" value="P:L-leucine biosynthetic process"/>
    <property type="evidence" value="ECO:0007669"/>
    <property type="project" value="UniProtKB-UniRule"/>
</dbReference>
<dbReference type="CDD" id="cd07940">
    <property type="entry name" value="DRE_TIM_IPMS"/>
    <property type="match status" value="1"/>
</dbReference>
<dbReference type="FunFam" id="1.10.238.260:FF:000001">
    <property type="entry name" value="2-isopropylmalate synthase"/>
    <property type="match status" value="1"/>
</dbReference>
<dbReference type="FunFam" id="3.20.20.70:FF:000010">
    <property type="entry name" value="2-isopropylmalate synthase"/>
    <property type="match status" value="1"/>
</dbReference>
<dbReference type="FunFam" id="3.30.160.270:FF:000001">
    <property type="entry name" value="2-isopropylmalate synthase"/>
    <property type="match status" value="1"/>
</dbReference>
<dbReference type="Gene3D" id="1.10.238.260">
    <property type="match status" value="1"/>
</dbReference>
<dbReference type="Gene3D" id="3.30.160.270">
    <property type="match status" value="1"/>
</dbReference>
<dbReference type="Gene3D" id="3.20.20.70">
    <property type="entry name" value="Aldolase class I"/>
    <property type="match status" value="1"/>
</dbReference>
<dbReference type="HAMAP" id="MF_01025">
    <property type="entry name" value="LeuA_type1"/>
    <property type="match status" value="1"/>
</dbReference>
<dbReference type="InterPro" id="IPR050073">
    <property type="entry name" value="2-IPM_HCS-like"/>
</dbReference>
<dbReference type="InterPro" id="IPR013709">
    <property type="entry name" value="2-isopropylmalate_synth_dimer"/>
</dbReference>
<dbReference type="InterPro" id="IPR002034">
    <property type="entry name" value="AIPM/Hcit_synth_CS"/>
</dbReference>
<dbReference type="InterPro" id="IPR013785">
    <property type="entry name" value="Aldolase_TIM"/>
</dbReference>
<dbReference type="InterPro" id="IPR054691">
    <property type="entry name" value="LeuA/HCS_post-cat"/>
</dbReference>
<dbReference type="InterPro" id="IPR036230">
    <property type="entry name" value="LeuA_allosteric_dom_sf"/>
</dbReference>
<dbReference type="InterPro" id="IPR005671">
    <property type="entry name" value="LeuA_bact_synth"/>
</dbReference>
<dbReference type="InterPro" id="IPR000891">
    <property type="entry name" value="PYR_CT"/>
</dbReference>
<dbReference type="NCBIfam" id="TIGR00973">
    <property type="entry name" value="leuA_bact"/>
    <property type="match status" value="1"/>
</dbReference>
<dbReference type="NCBIfam" id="NF002084">
    <property type="entry name" value="PRK00915.1-1"/>
    <property type="match status" value="1"/>
</dbReference>
<dbReference type="NCBIfam" id="NF002086">
    <property type="entry name" value="PRK00915.1-3"/>
    <property type="match status" value="1"/>
</dbReference>
<dbReference type="PANTHER" id="PTHR10277:SF9">
    <property type="entry name" value="2-ISOPROPYLMALATE SYNTHASE 1, CHLOROPLASTIC-RELATED"/>
    <property type="match status" value="1"/>
</dbReference>
<dbReference type="PANTHER" id="PTHR10277">
    <property type="entry name" value="HOMOCITRATE SYNTHASE-RELATED"/>
    <property type="match status" value="1"/>
</dbReference>
<dbReference type="Pfam" id="PF22617">
    <property type="entry name" value="HCS_D2"/>
    <property type="match status" value="1"/>
</dbReference>
<dbReference type="Pfam" id="PF00682">
    <property type="entry name" value="HMGL-like"/>
    <property type="match status" value="1"/>
</dbReference>
<dbReference type="Pfam" id="PF08502">
    <property type="entry name" value="LeuA_dimer"/>
    <property type="match status" value="1"/>
</dbReference>
<dbReference type="SMART" id="SM00917">
    <property type="entry name" value="LeuA_dimer"/>
    <property type="match status" value="1"/>
</dbReference>
<dbReference type="SUPFAM" id="SSF110921">
    <property type="entry name" value="2-isopropylmalate synthase LeuA, allosteric (dimerisation) domain"/>
    <property type="match status" value="1"/>
</dbReference>
<dbReference type="SUPFAM" id="SSF51569">
    <property type="entry name" value="Aldolase"/>
    <property type="match status" value="1"/>
</dbReference>
<dbReference type="PROSITE" id="PS00815">
    <property type="entry name" value="AIPM_HOMOCIT_SYNTH_1"/>
    <property type="match status" value="1"/>
</dbReference>
<dbReference type="PROSITE" id="PS00816">
    <property type="entry name" value="AIPM_HOMOCIT_SYNTH_2"/>
    <property type="match status" value="1"/>
</dbReference>
<dbReference type="PROSITE" id="PS50991">
    <property type="entry name" value="PYR_CT"/>
    <property type="match status" value="1"/>
</dbReference>
<comment type="function">
    <text evidence="1">Catalyzes the condensation of the acetyl group of acetyl-CoA with 3-methyl-2-oxobutanoate (2-ketoisovalerate) to form 3-carboxy-3-hydroxy-4-methylpentanoate (2-isopropylmalate).</text>
</comment>
<comment type="catalytic activity">
    <reaction evidence="1">
        <text>3-methyl-2-oxobutanoate + acetyl-CoA + H2O = (2S)-2-isopropylmalate + CoA + H(+)</text>
        <dbReference type="Rhea" id="RHEA:21524"/>
        <dbReference type="ChEBI" id="CHEBI:1178"/>
        <dbReference type="ChEBI" id="CHEBI:11851"/>
        <dbReference type="ChEBI" id="CHEBI:15377"/>
        <dbReference type="ChEBI" id="CHEBI:15378"/>
        <dbReference type="ChEBI" id="CHEBI:57287"/>
        <dbReference type="ChEBI" id="CHEBI:57288"/>
        <dbReference type="EC" id="2.3.3.13"/>
    </reaction>
</comment>
<comment type="cofactor">
    <cofactor evidence="1">
        <name>Mn(2+)</name>
        <dbReference type="ChEBI" id="CHEBI:29035"/>
    </cofactor>
</comment>
<comment type="pathway">
    <text evidence="1">Amino-acid biosynthesis; L-leucine biosynthesis; L-leucine from 3-methyl-2-oxobutanoate: step 1/4.</text>
</comment>
<comment type="subunit">
    <text evidence="1">Homodimer.</text>
</comment>
<comment type="subcellular location">
    <subcellularLocation>
        <location evidence="1">Cytoplasm</location>
    </subcellularLocation>
</comment>
<comment type="similarity">
    <text evidence="1">Belongs to the alpha-IPM synthase/homocitrate synthase family. LeuA type 1 subfamily.</text>
</comment>
<gene>
    <name evidence="1" type="primary">leuA</name>
    <name type="ordered locus">Spea_3828</name>
</gene>
<feature type="chain" id="PRO_1000149286" description="2-isopropylmalate synthase">
    <location>
        <begin position="1"/>
        <end position="523"/>
    </location>
</feature>
<feature type="domain" description="Pyruvate carboxyltransferase" evidence="1">
    <location>
        <begin position="5"/>
        <end position="267"/>
    </location>
</feature>
<feature type="region of interest" description="Regulatory domain" evidence="1">
    <location>
        <begin position="392"/>
        <end position="523"/>
    </location>
</feature>
<feature type="binding site" evidence="1">
    <location>
        <position position="14"/>
    </location>
    <ligand>
        <name>Mn(2+)</name>
        <dbReference type="ChEBI" id="CHEBI:29035"/>
    </ligand>
</feature>
<feature type="binding site" evidence="1">
    <location>
        <position position="202"/>
    </location>
    <ligand>
        <name>Mn(2+)</name>
        <dbReference type="ChEBI" id="CHEBI:29035"/>
    </ligand>
</feature>
<feature type="binding site" evidence="1">
    <location>
        <position position="204"/>
    </location>
    <ligand>
        <name>Mn(2+)</name>
        <dbReference type="ChEBI" id="CHEBI:29035"/>
    </ligand>
</feature>
<feature type="binding site" evidence="1">
    <location>
        <position position="238"/>
    </location>
    <ligand>
        <name>Mn(2+)</name>
        <dbReference type="ChEBI" id="CHEBI:29035"/>
    </ligand>
</feature>
<keyword id="KW-0028">Amino-acid biosynthesis</keyword>
<keyword id="KW-0100">Branched-chain amino acid biosynthesis</keyword>
<keyword id="KW-0963">Cytoplasm</keyword>
<keyword id="KW-0432">Leucine biosynthesis</keyword>
<keyword id="KW-0464">Manganese</keyword>
<keyword id="KW-0479">Metal-binding</keyword>
<keyword id="KW-1185">Reference proteome</keyword>
<keyword id="KW-0808">Transferase</keyword>
<proteinExistence type="inferred from homology"/>
<name>LEU1_SHEPA</name>
<reference key="1">
    <citation type="submission" date="2007-10" db="EMBL/GenBank/DDBJ databases">
        <title>Complete sequence of Shewanella pealeana ATCC 700345.</title>
        <authorList>
            <consortium name="US DOE Joint Genome Institute"/>
            <person name="Copeland A."/>
            <person name="Lucas S."/>
            <person name="Lapidus A."/>
            <person name="Barry K."/>
            <person name="Glavina del Rio T."/>
            <person name="Dalin E."/>
            <person name="Tice H."/>
            <person name="Pitluck S."/>
            <person name="Chertkov O."/>
            <person name="Brettin T."/>
            <person name="Bruce D."/>
            <person name="Detter J.C."/>
            <person name="Han C."/>
            <person name="Schmutz J."/>
            <person name="Larimer F."/>
            <person name="Land M."/>
            <person name="Hauser L."/>
            <person name="Kyrpides N."/>
            <person name="Kim E."/>
            <person name="Zhao J.-S.Z."/>
            <person name="Manno D."/>
            <person name="Hawari J."/>
            <person name="Richardson P."/>
        </authorList>
    </citation>
    <scope>NUCLEOTIDE SEQUENCE [LARGE SCALE GENOMIC DNA]</scope>
    <source>
        <strain>ATCC 700345 / ANG-SQ1</strain>
    </source>
</reference>
<protein>
    <recommendedName>
        <fullName evidence="1">2-isopropylmalate synthase</fullName>
        <ecNumber evidence="1">2.3.3.13</ecNumber>
    </recommendedName>
    <alternativeName>
        <fullName evidence="1">Alpha-IPM synthase</fullName>
    </alternativeName>
    <alternativeName>
        <fullName evidence="1">Alpha-isopropylmalate synthase</fullName>
    </alternativeName>
</protein>